<protein>
    <recommendedName>
        <fullName evidence="4">Pyrokinin-2</fullName>
        <shortName evidence="4">PK-2</shortName>
    </recommendedName>
    <alternativeName>
        <fullName evidence="1">FXPRL-amide</fullName>
    </alternativeName>
</protein>
<reference evidence="5" key="1">
    <citation type="journal article" date="2012" name="Syst. Biol.">
        <title>Peptidomics-based phylogeny and biogeography of Mantophasmatodea (Hexapoda).</title>
        <authorList>
            <person name="Predel R."/>
            <person name="Neupert S."/>
            <person name="Huetteroth W."/>
            <person name="Kahnt J."/>
            <person name="Waidelich D."/>
            <person name="Roth S."/>
        </authorList>
    </citation>
    <scope>PROTEIN SEQUENCE</scope>
    <scope>AMIDATION AT LEU-8</scope>
    <source>
        <tissue evidence="3">Corpora cardiaca</tissue>
    </source>
</reference>
<feature type="peptide" id="PRO_0000421585" description="Pyrokinin-2" evidence="3">
    <location>
        <begin position="1"/>
        <end position="8"/>
    </location>
</feature>
<feature type="modified residue" description="Leucine amide" evidence="3">
    <location>
        <position position="8"/>
    </location>
</feature>
<dbReference type="GO" id="GO:0005576">
    <property type="term" value="C:extracellular region"/>
    <property type="evidence" value="ECO:0007669"/>
    <property type="project" value="UniProtKB-SubCell"/>
</dbReference>
<dbReference type="GO" id="GO:0007218">
    <property type="term" value="P:neuropeptide signaling pathway"/>
    <property type="evidence" value="ECO:0007669"/>
    <property type="project" value="UniProtKB-KW"/>
</dbReference>
<keyword id="KW-0027">Amidation</keyword>
<keyword id="KW-0903">Direct protein sequencing</keyword>
<keyword id="KW-0527">Neuropeptide</keyword>
<keyword id="KW-0964">Secreted</keyword>
<organism>
    <name type="scientific">Hemilobophasma montaguense</name>
    <name type="common">Gladiator</name>
    <name type="synonym">Heel-walker</name>
    <dbReference type="NCBI Taxonomy" id="253130"/>
    <lineage>
        <taxon>Eukaryota</taxon>
        <taxon>Metazoa</taxon>
        <taxon>Ecdysozoa</taxon>
        <taxon>Arthropoda</taxon>
        <taxon>Hexapoda</taxon>
        <taxon>Insecta</taxon>
        <taxon>Pterygota</taxon>
        <taxon>Neoptera</taxon>
        <taxon>Polyneoptera</taxon>
        <taxon>Mantophasmatodea</taxon>
        <taxon>Austrophasmatidae</taxon>
        <taxon>Hemilobophasma</taxon>
    </lineage>
</organism>
<proteinExistence type="evidence at protein level"/>
<accession>B3A0D1</accession>
<sequence>SPPFAPRL</sequence>
<comment type="function">
    <text evidence="1">Myoactive.</text>
</comment>
<comment type="subcellular location">
    <subcellularLocation>
        <location evidence="6">Secreted</location>
    </subcellularLocation>
</comment>
<comment type="similarity">
    <text evidence="2">Belongs to the pyrokinin family.</text>
</comment>
<evidence type="ECO:0000250" key="1">
    <source>
        <dbReference type="UniProtKB" id="P82619"/>
    </source>
</evidence>
<evidence type="ECO:0000255" key="2"/>
<evidence type="ECO:0000269" key="3">
    <source>
    </source>
</evidence>
<evidence type="ECO:0000303" key="4">
    <source>
    </source>
</evidence>
<evidence type="ECO:0000305" key="5"/>
<evidence type="ECO:0000305" key="6">
    <source>
    </source>
</evidence>
<name>PPK2_HEMMO</name>